<evidence type="ECO:0000255" key="1">
    <source>
        <dbReference type="HAMAP-Rule" id="MF_00251"/>
    </source>
</evidence>
<evidence type="ECO:0000305" key="2"/>
<evidence type="ECO:0007829" key="3">
    <source>
        <dbReference type="PDB" id="7M4V"/>
    </source>
</evidence>
<protein>
    <recommendedName>
        <fullName evidence="1">Large ribosomal subunit protein bL36</fullName>
    </recommendedName>
    <alternativeName>
        <fullName evidence="2">50S ribosomal protein L36</fullName>
    </alternativeName>
</protein>
<accession>B7IA18</accession>
<keyword id="KW-0002">3D-structure</keyword>
<keyword id="KW-0687">Ribonucleoprotein</keyword>
<keyword id="KW-0689">Ribosomal protein</keyword>
<reference key="1">
    <citation type="journal article" date="2008" name="J. Bacteriol.">
        <title>Comparative genome sequence analysis of multidrug-resistant Acinetobacter baumannii.</title>
        <authorList>
            <person name="Adams M.D."/>
            <person name="Goglin K."/>
            <person name="Molyneaux N."/>
            <person name="Hujer K.M."/>
            <person name="Lavender H."/>
            <person name="Jamison J.J."/>
            <person name="MacDonald I.J."/>
            <person name="Martin K.M."/>
            <person name="Russo T."/>
            <person name="Campagnari A.A."/>
            <person name="Hujer A.M."/>
            <person name="Bonomo R.A."/>
            <person name="Gill S.R."/>
        </authorList>
    </citation>
    <scope>NUCLEOTIDE SEQUENCE [LARGE SCALE GENOMIC DNA]</scope>
    <source>
        <strain>AB0057</strain>
    </source>
</reference>
<sequence>MKVQASVKKICGSCKVIRRNGVIRVICSAEPRHKQRQG</sequence>
<organism>
    <name type="scientific">Acinetobacter baumannii (strain AB0057)</name>
    <dbReference type="NCBI Taxonomy" id="480119"/>
    <lineage>
        <taxon>Bacteria</taxon>
        <taxon>Pseudomonadati</taxon>
        <taxon>Pseudomonadota</taxon>
        <taxon>Gammaproteobacteria</taxon>
        <taxon>Moraxellales</taxon>
        <taxon>Moraxellaceae</taxon>
        <taxon>Acinetobacter</taxon>
        <taxon>Acinetobacter calcoaceticus/baumannii complex</taxon>
    </lineage>
</organism>
<gene>
    <name evidence="1" type="primary">rpmJ</name>
    <name type="ordered locus">AB57_3509</name>
</gene>
<dbReference type="EMBL" id="CP001182">
    <property type="protein sequence ID" value="ACJ42876.1"/>
    <property type="molecule type" value="Genomic_DNA"/>
</dbReference>
<dbReference type="RefSeq" id="WP_000867907.1">
    <property type="nucleotide sequence ID" value="NC_011586.2"/>
</dbReference>
<dbReference type="PDB" id="7M4V">
    <property type="method" value="EM"/>
    <property type="resolution" value="2.54 A"/>
    <property type="chains" value="3=1-38"/>
</dbReference>
<dbReference type="PDB" id="7RYF">
    <property type="method" value="EM"/>
    <property type="resolution" value="2.65 A"/>
    <property type="chains" value="3=1-38"/>
</dbReference>
<dbReference type="PDB" id="7RYG">
    <property type="method" value="EM"/>
    <property type="resolution" value="2.38 A"/>
    <property type="chains" value="3=1-38"/>
</dbReference>
<dbReference type="PDB" id="7RYH">
    <property type="method" value="EM"/>
    <property type="resolution" value="2.43 A"/>
    <property type="chains" value="3=1-38"/>
</dbReference>
<dbReference type="PDB" id="7UVV">
    <property type="method" value="EM"/>
    <property type="resolution" value="2.50 A"/>
    <property type="chains" value="3=1-38"/>
</dbReference>
<dbReference type="PDB" id="7UVW">
    <property type="method" value="EM"/>
    <property type="resolution" value="2.37 A"/>
    <property type="chains" value="3=1-38"/>
</dbReference>
<dbReference type="PDB" id="7UVX">
    <property type="method" value="EM"/>
    <property type="resolution" value="2.35 A"/>
    <property type="chains" value="3=1-38"/>
</dbReference>
<dbReference type="PDB" id="7UVY">
    <property type="method" value="EM"/>
    <property type="resolution" value="2.39 A"/>
    <property type="chains" value="3=1-38"/>
</dbReference>
<dbReference type="PDB" id="7UVZ">
    <property type="method" value="EM"/>
    <property type="resolution" value="2.21 A"/>
    <property type="chains" value="3=1-38"/>
</dbReference>
<dbReference type="PDB" id="7UW1">
    <property type="method" value="EM"/>
    <property type="resolution" value="2.21 A"/>
    <property type="chains" value="3=1-38"/>
</dbReference>
<dbReference type="PDBsum" id="7M4V"/>
<dbReference type="PDBsum" id="7RYF"/>
<dbReference type="PDBsum" id="7RYG"/>
<dbReference type="PDBsum" id="7RYH"/>
<dbReference type="PDBsum" id="7UVV"/>
<dbReference type="PDBsum" id="7UVW"/>
<dbReference type="PDBsum" id="7UVX"/>
<dbReference type="PDBsum" id="7UVY"/>
<dbReference type="PDBsum" id="7UVZ"/>
<dbReference type="PDBsum" id="7UW1"/>
<dbReference type="EMDB" id="EMD-24738"/>
<dbReference type="EMDB" id="EMD-24739"/>
<dbReference type="EMDB" id="EMD-24740"/>
<dbReference type="EMDB" id="EMD-26817"/>
<dbReference type="EMDB" id="EMD-26818"/>
<dbReference type="EMDB" id="EMD-26819"/>
<dbReference type="EMDB" id="EMD-26820"/>
<dbReference type="EMDB" id="EMD-26821"/>
<dbReference type="EMDB" id="EMD-26822"/>
<dbReference type="SMR" id="B7IA18"/>
<dbReference type="IntAct" id="B7IA18">
    <property type="interactions" value="2"/>
</dbReference>
<dbReference type="GeneID" id="97425220"/>
<dbReference type="KEGG" id="abn:AB57_3509"/>
<dbReference type="HOGENOM" id="CLU_135723_6_2_6"/>
<dbReference type="Proteomes" id="UP000007094">
    <property type="component" value="Chromosome"/>
</dbReference>
<dbReference type="GO" id="GO:0005737">
    <property type="term" value="C:cytoplasm"/>
    <property type="evidence" value="ECO:0007669"/>
    <property type="project" value="UniProtKB-ARBA"/>
</dbReference>
<dbReference type="GO" id="GO:1990904">
    <property type="term" value="C:ribonucleoprotein complex"/>
    <property type="evidence" value="ECO:0007669"/>
    <property type="project" value="UniProtKB-KW"/>
</dbReference>
<dbReference type="GO" id="GO:0005840">
    <property type="term" value="C:ribosome"/>
    <property type="evidence" value="ECO:0007669"/>
    <property type="project" value="UniProtKB-KW"/>
</dbReference>
<dbReference type="GO" id="GO:0003735">
    <property type="term" value="F:structural constituent of ribosome"/>
    <property type="evidence" value="ECO:0007669"/>
    <property type="project" value="InterPro"/>
</dbReference>
<dbReference type="GO" id="GO:0006412">
    <property type="term" value="P:translation"/>
    <property type="evidence" value="ECO:0007669"/>
    <property type="project" value="UniProtKB-UniRule"/>
</dbReference>
<dbReference type="HAMAP" id="MF_00251">
    <property type="entry name" value="Ribosomal_bL36"/>
    <property type="match status" value="1"/>
</dbReference>
<dbReference type="InterPro" id="IPR000473">
    <property type="entry name" value="Ribosomal_bL36"/>
</dbReference>
<dbReference type="InterPro" id="IPR035977">
    <property type="entry name" value="Ribosomal_bL36_sp"/>
</dbReference>
<dbReference type="NCBIfam" id="TIGR01022">
    <property type="entry name" value="rpmJ_bact"/>
    <property type="match status" value="1"/>
</dbReference>
<dbReference type="PANTHER" id="PTHR42888">
    <property type="entry name" value="50S RIBOSOMAL PROTEIN L36, CHLOROPLASTIC"/>
    <property type="match status" value="1"/>
</dbReference>
<dbReference type="PANTHER" id="PTHR42888:SF1">
    <property type="entry name" value="LARGE RIBOSOMAL SUBUNIT PROTEIN BL36C"/>
    <property type="match status" value="1"/>
</dbReference>
<dbReference type="Pfam" id="PF00444">
    <property type="entry name" value="Ribosomal_L36"/>
    <property type="match status" value="1"/>
</dbReference>
<dbReference type="SUPFAM" id="SSF57840">
    <property type="entry name" value="Ribosomal protein L36"/>
    <property type="match status" value="1"/>
</dbReference>
<dbReference type="PROSITE" id="PS00828">
    <property type="entry name" value="RIBOSOMAL_L36"/>
    <property type="match status" value="1"/>
</dbReference>
<name>RL36_ACIB5</name>
<comment type="similarity">
    <text evidence="1">Belongs to the bacterial ribosomal protein bL36 family.</text>
</comment>
<feature type="chain" id="PRO_1000196153" description="Large ribosomal subunit protein bL36">
    <location>
        <begin position="1"/>
        <end position="38"/>
    </location>
</feature>
<feature type="strand" evidence="3">
    <location>
        <begin position="14"/>
        <end position="19"/>
    </location>
</feature>
<feature type="strand" evidence="3">
    <location>
        <begin position="22"/>
        <end position="29"/>
    </location>
</feature>
<feature type="helix" evidence="3">
    <location>
        <begin position="31"/>
        <end position="33"/>
    </location>
</feature>
<proteinExistence type="evidence at protein level"/>